<name>LIPA_GEOSM</name>
<gene>
    <name evidence="1" type="primary">lipA</name>
    <name type="ordered locus">GM21_0399</name>
</gene>
<keyword id="KW-0004">4Fe-4S</keyword>
<keyword id="KW-0963">Cytoplasm</keyword>
<keyword id="KW-0408">Iron</keyword>
<keyword id="KW-0411">Iron-sulfur</keyword>
<keyword id="KW-0479">Metal-binding</keyword>
<keyword id="KW-0949">S-adenosyl-L-methionine</keyword>
<keyword id="KW-0808">Transferase</keyword>
<comment type="function">
    <text evidence="1">Catalyzes the radical-mediated insertion of two sulfur atoms into the C-6 and C-8 positions of the octanoyl moiety bound to the lipoyl domains of lipoate-dependent enzymes, thereby converting the octanoylated domains into lipoylated derivatives.</text>
</comment>
<comment type="catalytic activity">
    <reaction evidence="1">
        <text>[[Fe-S] cluster scaffold protein carrying a second [4Fe-4S](2+) cluster] + N(6)-octanoyl-L-lysyl-[protein] + 2 oxidized [2Fe-2S]-[ferredoxin] + 2 S-adenosyl-L-methionine + 4 H(+) = [[Fe-S] cluster scaffold protein] + N(6)-[(R)-dihydrolipoyl]-L-lysyl-[protein] + 4 Fe(3+) + 2 hydrogen sulfide + 2 5'-deoxyadenosine + 2 L-methionine + 2 reduced [2Fe-2S]-[ferredoxin]</text>
        <dbReference type="Rhea" id="RHEA:16585"/>
        <dbReference type="Rhea" id="RHEA-COMP:9928"/>
        <dbReference type="Rhea" id="RHEA-COMP:10000"/>
        <dbReference type="Rhea" id="RHEA-COMP:10001"/>
        <dbReference type="Rhea" id="RHEA-COMP:10475"/>
        <dbReference type="Rhea" id="RHEA-COMP:14568"/>
        <dbReference type="Rhea" id="RHEA-COMP:14569"/>
        <dbReference type="ChEBI" id="CHEBI:15378"/>
        <dbReference type="ChEBI" id="CHEBI:17319"/>
        <dbReference type="ChEBI" id="CHEBI:29034"/>
        <dbReference type="ChEBI" id="CHEBI:29919"/>
        <dbReference type="ChEBI" id="CHEBI:33722"/>
        <dbReference type="ChEBI" id="CHEBI:33737"/>
        <dbReference type="ChEBI" id="CHEBI:33738"/>
        <dbReference type="ChEBI" id="CHEBI:57844"/>
        <dbReference type="ChEBI" id="CHEBI:59789"/>
        <dbReference type="ChEBI" id="CHEBI:78809"/>
        <dbReference type="ChEBI" id="CHEBI:83100"/>
        <dbReference type="EC" id="2.8.1.8"/>
    </reaction>
</comment>
<comment type="cofactor">
    <cofactor evidence="1">
        <name>[4Fe-4S] cluster</name>
        <dbReference type="ChEBI" id="CHEBI:49883"/>
    </cofactor>
    <text evidence="1">Binds 2 [4Fe-4S] clusters per subunit. One cluster is coordinated with 3 cysteines and an exchangeable S-adenosyl-L-methionine.</text>
</comment>
<comment type="pathway">
    <text evidence="1">Protein modification; protein lipoylation via endogenous pathway; protein N(6)-(lipoyl)lysine from octanoyl-[acyl-carrier-protein]: step 2/2.</text>
</comment>
<comment type="subcellular location">
    <subcellularLocation>
        <location evidence="1">Cytoplasm</location>
    </subcellularLocation>
</comment>
<comment type="similarity">
    <text evidence="1">Belongs to the radical SAM superfamily. Lipoyl synthase family.</text>
</comment>
<proteinExistence type="inferred from homology"/>
<protein>
    <recommendedName>
        <fullName evidence="1">Lipoyl synthase</fullName>
        <ecNumber evidence="1">2.8.1.8</ecNumber>
    </recommendedName>
    <alternativeName>
        <fullName evidence="1">Lip-syn</fullName>
        <shortName evidence="1">LS</shortName>
    </alternativeName>
    <alternativeName>
        <fullName evidence="1">Lipoate synthase</fullName>
    </alternativeName>
    <alternativeName>
        <fullName evidence="1">Lipoic acid synthase</fullName>
    </alternativeName>
    <alternativeName>
        <fullName evidence="1">Sulfur insertion protein LipA</fullName>
    </alternativeName>
</protein>
<feature type="chain" id="PRO_1000204148" description="Lipoyl synthase">
    <location>
        <begin position="1"/>
        <end position="291"/>
    </location>
</feature>
<feature type="domain" description="Radical SAM core" evidence="2">
    <location>
        <begin position="47"/>
        <end position="262"/>
    </location>
</feature>
<feature type="binding site" evidence="1">
    <location>
        <position position="35"/>
    </location>
    <ligand>
        <name>[4Fe-4S] cluster</name>
        <dbReference type="ChEBI" id="CHEBI:49883"/>
        <label>1</label>
    </ligand>
</feature>
<feature type="binding site" evidence="1">
    <location>
        <position position="40"/>
    </location>
    <ligand>
        <name>[4Fe-4S] cluster</name>
        <dbReference type="ChEBI" id="CHEBI:49883"/>
        <label>1</label>
    </ligand>
</feature>
<feature type="binding site" evidence="1">
    <location>
        <position position="46"/>
    </location>
    <ligand>
        <name>[4Fe-4S] cluster</name>
        <dbReference type="ChEBI" id="CHEBI:49883"/>
        <label>1</label>
    </ligand>
</feature>
<feature type="binding site" evidence="1">
    <location>
        <position position="61"/>
    </location>
    <ligand>
        <name>[4Fe-4S] cluster</name>
        <dbReference type="ChEBI" id="CHEBI:49883"/>
        <label>2</label>
        <note>4Fe-4S-S-AdoMet</note>
    </ligand>
</feature>
<feature type="binding site" evidence="1">
    <location>
        <position position="65"/>
    </location>
    <ligand>
        <name>[4Fe-4S] cluster</name>
        <dbReference type="ChEBI" id="CHEBI:49883"/>
        <label>2</label>
        <note>4Fe-4S-S-AdoMet</note>
    </ligand>
</feature>
<feature type="binding site" evidence="1">
    <location>
        <position position="68"/>
    </location>
    <ligand>
        <name>[4Fe-4S] cluster</name>
        <dbReference type="ChEBI" id="CHEBI:49883"/>
        <label>2</label>
        <note>4Fe-4S-S-AdoMet</note>
    </ligand>
</feature>
<feature type="binding site" evidence="1">
    <location>
        <position position="273"/>
    </location>
    <ligand>
        <name>[4Fe-4S] cluster</name>
        <dbReference type="ChEBI" id="CHEBI:49883"/>
        <label>1</label>
    </ligand>
</feature>
<reference key="1">
    <citation type="submission" date="2009-07" db="EMBL/GenBank/DDBJ databases">
        <title>Complete sequence of Geobacter sp. M21.</title>
        <authorList>
            <consortium name="US DOE Joint Genome Institute"/>
            <person name="Lucas S."/>
            <person name="Copeland A."/>
            <person name="Lapidus A."/>
            <person name="Glavina del Rio T."/>
            <person name="Dalin E."/>
            <person name="Tice H."/>
            <person name="Bruce D."/>
            <person name="Goodwin L."/>
            <person name="Pitluck S."/>
            <person name="Saunders E."/>
            <person name="Brettin T."/>
            <person name="Detter J.C."/>
            <person name="Han C."/>
            <person name="Larimer F."/>
            <person name="Land M."/>
            <person name="Hauser L."/>
            <person name="Kyrpides N."/>
            <person name="Ovchinnikova G."/>
            <person name="Lovley D."/>
        </authorList>
    </citation>
    <scope>NUCLEOTIDE SEQUENCE [LARGE SCALE GENOMIC DNA]</scope>
    <source>
        <strain>M21</strain>
    </source>
</reference>
<dbReference type="EC" id="2.8.1.8" evidence="1"/>
<dbReference type="EMBL" id="CP001661">
    <property type="protein sequence ID" value="ACT16480.1"/>
    <property type="molecule type" value="Genomic_DNA"/>
</dbReference>
<dbReference type="SMR" id="C6DYX9"/>
<dbReference type="STRING" id="443144.GM21_0399"/>
<dbReference type="KEGG" id="gem:GM21_0399"/>
<dbReference type="eggNOG" id="COG0320">
    <property type="taxonomic scope" value="Bacteria"/>
</dbReference>
<dbReference type="HOGENOM" id="CLU_033144_2_1_7"/>
<dbReference type="OrthoDB" id="9787898at2"/>
<dbReference type="UniPathway" id="UPA00538">
    <property type="reaction ID" value="UER00593"/>
</dbReference>
<dbReference type="GO" id="GO:0005737">
    <property type="term" value="C:cytoplasm"/>
    <property type="evidence" value="ECO:0007669"/>
    <property type="project" value="UniProtKB-SubCell"/>
</dbReference>
<dbReference type="GO" id="GO:0051539">
    <property type="term" value="F:4 iron, 4 sulfur cluster binding"/>
    <property type="evidence" value="ECO:0007669"/>
    <property type="project" value="UniProtKB-UniRule"/>
</dbReference>
<dbReference type="GO" id="GO:0016992">
    <property type="term" value="F:lipoate synthase activity"/>
    <property type="evidence" value="ECO:0007669"/>
    <property type="project" value="UniProtKB-UniRule"/>
</dbReference>
<dbReference type="GO" id="GO:0046872">
    <property type="term" value="F:metal ion binding"/>
    <property type="evidence" value="ECO:0007669"/>
    <property type="project" value="UniProtKB-KW"/>
</dbReference>
<dbReference type="CDD" id="cd01335">
    <property type="entry name" value="Radical_SAM"/>
    <property type="match status" value="1"/>
</dbReference>
<dbReference type="FunFam" id="3.20.20.70:FF:000186">
    <property type="entry name" value="Lipoyl synthase"/>
    <property type="match status" value="1"/>
</dbReference>
<dbReference type="Gene3D" id="3.20.20.70">
    <property type="entry name" value="Aldolase class I"/>
    <property type="match status" value="1"/>
</dbReference>
<dbReference type="HAMAP" id="MF_00206">
    <property type="entry name" value="Lipoyl_synth"/>
    <property type="match status" value="1"/>
</dbReference>
<dbReference type="InterPro" id="IPR013785">
    <property type="entry name" value="Aldolase_TIM"/>
</dbReference>
<dbReference type="InterPro" id="IPR006638">
    <property type="entry name" value="Elp3/MiaA/NifB-like_rSAM"/>
</dbReference>
<dbReference type="InterPro" id="IPR003698">
    <property type="entry name" value="Lipoyl_synth"/>
</dbReference>
<dbReference type="InterPro" id="IPR007197">
    <property type="entry name" value="rSAM"/>
</dbReference>
<dbReference type="NCBIfam" id="TIGR00510">
    <property type="entry name" value="lipA"/>
    <property type="match status" value="1"/>
</dbReference>
<dbReference type="NCBIfam" id="NF004019">
    <property type="entry name" value="PRK05481.1"/>
    <property type="match status" value="1"/>
</dbReference>
<dbReference type="NCBIfam" id="NF009544">
    <property type="entry name" value="PRK12928.1"/>
    <property type="match status" value="1"/>
</dbReference>
<dbReference type="PANTHER" id="PTHR10949">
    <property type="entry name" value="LIPOYL SYNTHASE"/>
    <property type="match status" value="1"/>
</dbReference>
<dbReference type="PANTHER" id="PTHR10949:SF0">
    <property type="entry name" value="LIPOYL SYNTHASE, MITOCHONDRIAL"/>
    <property type="match status" value="1"/>
</dbReference>
<dbReference type="Pfam" id="PF04055">
    <property type="entry name" value="Radical_SAM"/>
    <property type="match status" value="1"/>
</dbReference>
<dbReference type="PIRSF" id="PIRSF005963">
    <property type="entry name" value="Lipoyl_synth"/>
    <property type="match status" value="1"/>
</dbReference>
<dbReference type="SFLD" id="SFLDF00271">
    <property type="entry name" value="lipoyl_synthase"/>
    <property type="match status" value="1"/>
</dbReference>
<dbReference type="SFLD" id="SFLDG01058">
    <property type="entry name" value="lipoyl_synthase_like"/>
    <property type="match status" value="1"/>
</dbReference>
<dbReference type="SMART" id="SM00729">
    <property type="entry name" value="Elp3"/>
    <property type="match status" value="1"/>
</dbReference>
<dbReference type="SUPFAM" id="SSF102114">
    <property type="entry name" value="Radical SAM enzymes"/>
    <property type="match status" value="1"/>
</dbReference>
<dbReference type="PROSITE" id="PS51918">
    <property type="entry name" value="RADICAL_SAM"/>
    <property type="match status" value="1"/>
</dbReference>
<evidence type="ECO:0000255" key="1">
    <source>
        <dbReference type="HAMAP-Rule" id="MF_00206"/>
    </source>
</evidence>
<evidence type="ECO:0000255" key="2">
    <source>
        <dbReference type="PROSITE-ProRule" id="PRU01266"/>
    </source>
</evidence>
<sequence length="291" mass="32095">MDPIRKPAWLQKKITPAAHAEMEGLLKELRLNTVCQQARCPNITECFGKRQATFLILGRICTRLCSFCSVSKETPLPLEPGEAASVAEAVKRLGLSHVVITSPTRDDLSDGGASVYAETVARIRSVSPRTKVELLIPDFRGERAALAAVVESAPDILGHNLETVPRLYSIRSGADYQRSLDLLAQARRMAPDLNTKSGLMLGLGEEEAELYAVMEDLLKAGCGYLSLGQYLAPSRMHHPVQRYVEPELFEKYKEKALAMGFEHVESAPYVRSSYHAENYLEVKSPPPEGEG</sequence>
<organism>
    <name type="scientific">Geobacter sp. (strain M21)</name>
    <dbReference type="NCBI Taxonomy" id="443144"/>
    <lineage>
        <taxon>Bacteria</taxon>
        <taxon>Pseudomonadati</taxon>
        <taxon>Thermodesulfobacteriota</taxon>
        <taxon>Desulfuromonadia</taxon>
        <taxon>Geobacterales</taxon>
        <taxon>Geobacteraceae</taxon>
        <taxon>Geobacter</taxon>
    </lineage>
</organism>
<accession>C6DYX9</accession>